<keyword id="KW-1185">Reference proteome</keyword>
<keyword id="KW-0677">Repeat</keyword>
<keyword id="KW-0687">Ribonucleoprotein</keyword>
<keyword id="KW-0689">Ribosomal protein</keyword>
<keyword id="KW-0694">RNA-binding</keyword>
<evidence type="ECO:0000250" key="1"/>
<evidence type="ECO:0000255" key="2">
    <source>
        <dbReference type="PROSITE-ProRule" id="PRU00180"/>
    </source>
</evidence>
<evidence type="ECO:0000305" key="3"/>
<accession>P14129</accession>
<gene>
    <name type="primary">rpsA</name>
    <name type="ordered locus">R00255</name>
    <name type="ORF">SMc00335</name>
</gene>
<protein>
    <recommendedName>
        <fullName evidence="3">Small ribosomal subunit protein bS1</fullName>
    </recommendedName>
    <alternativeName>
        <fullName>30S ribosomal protein S1</fullName>
    </alternativeName>
</protein>
<reference key="1">
    <citation type="journal article" date="1988" name="Nucleic Acids Res.">
        <title>Cloning and characterization of a gene from Rhizobium melilotii 2011 coding for ribosomal protein S1.</title>
        <authorList>
            <person name="Schnier J."/>
            <person name="Thamm S."/>
            <person name="Lurz R."/>
            <person name="Hussain A."/>
            <person name="Faist G."/>
            <person name="Dobrinski B."/>
        </authorList>
    </citation>
    <scope>NUCLEOTIDE SEQUENCE [GENOMIC DNA]</scope>
    <source>
        <strain>RCR2011 / SU47</strain>
    </source>
</reference>
<reference key="2">
    <citation type="journal article" date="2001" name="Proc. Natl. Acad. Sci. U.S.A.">
        <title>Analysis of the chromosome sequence of the legume symbiont Sinorhizobium meliloti strain 1021.</title>
        <authorList>
            <person name="Capela D."/>
            <person name="Barloy-Hubler F."/>
            <person name="Gouzy J."/>
            <person name="Bothe G."/>
            <person name="Ampe F."/>
            <person name="Batut J."/>
            <person name="Boistard P."/>
            <person name="Becker A."/>
            <person name="Boutry M."/>
            <person name="Cadieu E."/>
            <person name="Dreano S."/>
            <person name="Gloux S."/>
            <person name="Godrie T."/>
            <person name="Goffeau A."/>
            <person name="Kahn D."/>
            <person name="Kiss E."/>
            <person name="Lelaure V."/>
            <person name="Masuy D."/>
            <person name="Pohl T."/>
            <person name="Portetelle D."/>
            <person name="Puehler A."/>
            <person name="Purnelle B."/>
            <person name="Ramsperger U."/>
            <person name="Renard C."/>
            <person name="Thebault P."/>
            <person name="Vandenbol M."/>
            <person name="Weidner S."/>
            <person name="Galibert F."/>
        </authorList>
    </citation>
    <scope>NUCLEOTIDE SEQUENCE [LARGE SCALE GENOMIC DNA]</scope>
    <source>
        <strain>1021</strain>
    </source>
</reference>
<reference key="3">
    <citation type="journal article" date="2001" name="Science">
        <title>The composite genome of the legume symbiont Sinorhizobium meliloti.</title>
        <authorList>
            <person name="Galibert F."/>
            <person name="Finan T.M."/>
            <person name="Long S.R."/>
            <person name="Puehler A."/>
            <person name="Abola P."/>
            <person name="Ampe F."/>
            <person name="Barloy-Hubler F."/>
            <person name="Barnett M.J."/>
            <person name="Becker A."/>
            <person name="Boistard P."/>
            <person name="Bothe G."/>
            <person name="Boutry M."/>
            <person name="Bowser L."/>
            <person name="Buhrmester J."/>
            <person name="Cadieu E."/>
            <person name="Capela D."/>
            <person name="Chain P."/>
            <person name="Cowie A."/>
            <person name="Davis R.W."/>
            <person name="Dreano S."/>
            <person name="Federspiel N.A."/>
            <person name="Fisher R.F."/>
            <person name="Gloux S."/>
            <person name="Godrie T."/>
            <person name="Goffeau A."/>
            <person name="Golding B."/>
            <person name="Gouzy J."/>
            <person name="Gurjal M."/>
            <person name="Hernandez-Lucas I."/>
            <person name="Hong A."/>
            <person name="Huizar L."/>
            <person name="Hyman R.W."/>
            <person name="Jones T."/>
            <person name="Kahn D."/>
            <person name="Kahn M.L."/>
            <person name="Kalman S."/>
            <person name="Keating D.H."/>
            <person name="Kiss E."/>
            <person name="Komp C."/>
            <person name="Lelaure V."/>
            <person name="Masuy D."/>
            <person name="Palm C."/>
            <person name="Peck M.C."/>
            <person name="Pohl T.M."/>
            <person name="Portetelle D."/>
            <person name="Purnelle B."/>
            <person name="Ramsperger U."/>
            <person name="Surzycki R."/>
            <person name="Thebault P."/>
            <person name="Vandenbol M."/>
            <person name="Vorhoelter F.J."/>
            <person name="Weidner S."/>
            <person name="Wells D.H."/>
            <person name="Wong K."/>
            <person name="Yeh K.-C."/>
            <person name="Batut J."/>
        </authorList>
    </citation>
    <scope>NUCLEOTIDE SEQUENCE [LARGE SCALE GENOMIC DNA]</scope>
    <source>
        <strain>1021</strain>
    </source>
</reference>
<organism>
    <name type="scientific">Rhizobium meliloti (strain 1021)</name>
    <name type="common">Ensifer meliloti</name>
    <name type="synonym">Sinorhizobium meliloti</name>
    <dbReference type="NCBI Taxonomy" id="266834"/>
    <lineage>
        <taxon>Bacteria</taxon>
        <taxon>Pseudomonadati</taxon>
        <taxon>Pseudomonadota</taxon>
        <taxon>Alphaproteobacteria</taxon>
        <taxon>Hyphomicrobiales</taxon>
        <taxon>Rhizobiaceae</taxon>
        <taxon>Sinorhizobium/Ensifer group</taxon>
        <taxon>Sinorhizobium</taxon>
    </lineage>
</organism>
<feature type="chain" id="PRO_0000196044" description="Small ribosomal subunit protein bS1">
    <location>
        <begin position="1"/>
        <end position="568"/>
    </location>
</feature>
<feature type="domain" description="S1 motif 1" evidence="2">
    <location>
        <begin position="27"/>
        <end position="93"/>
    </location>
</feature>
<feature type="domain" description="S1 motif 2" evidence="2">
    <location>
        <begin position="111"/>
        <end position="177"/>
    </location>
</feature>
<feature type="domain" description="S1 motif 3" evidence="2">
    <location>
        <begin position="198"/>
        <end position="266"/>
    </location>
</feature>
<feature type="domain" description="S1 motif 4" evidence="2">
    <location>
        <begin position="283"/>
        <end position="353"/>
    </location>
</feature>
<feature type="domain" description="S1 motif 5" evidence="2">
    <location>
        <begin position="370"/>
        <end position="440"/>
    </location>
</feature>
<feature type="domain" description="S1 motif 6" evidence="2">
    <location>
        <begin position="459"/>
        <end position="530"/>
    </location>
</feature>
<feature type="sequence conflict" description="In Ref. 1; CAA30404." evidence="3" ref="1">
    <original>A</original>
    <variation>R</variation>
    <location>
        <position position="88"/>
    </location>
</feature>
<feature type="sequence conflict" description="In Ref. 1; CAA30404." evidence="3" ref="1">
    <original>LMHNPQPFEI</original>
    <variation>ADAQPAALRN</variation>
    <location>
        <begin position="153"/>
        <end position="162"/>
    </location>
</feature>
<feature type="sequence conflict" description="In Ref. 1; CAA30404." evidence="3" ref="1">
    <original>N</original>
    <variation>K</variation>
    <location>
        <position position="235"/>
    </location>
</feature>
<feature type="sequence conflict" description="In Ref. 1; CAA30404." evidence="3" ref="1">
    <original>L</original>
    <variation>Q</variation>
    <location>
        <position position="241"/>
    </location>
</feature>
<feature type="sequence conflict" description="In Ref. 1; CAA30404." evidence="3" ref="1">
    <original>A</original>
    <variation>R</variation>
    <location>
        <position position="551"/>
    </location>
</feature>
<sequence length="568" mass="62640">MSATNPTRDDFAALLEESFAKTDLAEGYVAKGIVTAIEKDVAIVDVGLKVEGRVPLKEFGAKAKDGTLKVGDEVEVYVERIENALGEAVLSREKARREESWQRLEVKFEAGERVEGIIFNQVKGGFTVDLDGAVAFLPRSQVDIRPIRDVTPLMHNPQPFEILKMDKRRGNIVVSRRTVLEESRAEQRSEIVQNLEEGQVVEGVVKNITDYGAFVDLGGIDGLLHVTDMAWRRVNHPSEILNIGQQVKVQIIRINQETHRISLGMKQLESDPWDGIGAKYPVGKKISGTVTNITDYGAFVELEPGIEGLIHISEMSWTKKNVHPGKILSTSQEVDVVVLEVDPTKRRISLGLKQTLENPWQAFAHSHPAGTEVEGEVKNKTEFGLFIGLDGDVDGMVHLSDLDWNRPGEQVIEEFNKGDVVRAVVLDVDVDKERISLGIKQLGRDAVGEAAASGELRKNAVVSAEVIGVNDGGIEVRLVNHEDVTAFIRRADLSRDRDEQRPERFSVGQTVDARVTNFSKKDRKIQLSIKALEIAEEKEAVAQFGSSDSGASLGDILGAALKNRQNNE</sequence>
<proteinExistence type="inferred from homology"/>
<comment type="function">
    <text evidence="1">Binds mRNA; thus facilitating recognition of the initiation point. It is needed to translate mRNA with a short Shine-Dalgarno (SD) purine-rich sequence (By similarity).</text>
</comment>
<comment type="similarity">
    <text evidence="3">Belongs to the bacterial ribosomal protein bS1 family.</text>
</comment>
<name>RS1_RHIME</name>
<dbReference type="EMBL" id="X07528">
    <property type="protein sequence ID" value="CAA30404.1"/>
    <property type="molecule type" value="Genomic_DNA"/>
</dbReference>
<dbReference type="EMBL" id="AL591688">
    <property type="protein sequence ID" value="CAC41692.1"/>
    <property type="molecule type" value="Genomic_DNA"/>
</dbReference>
<dbReference type="PIR" id="S01055">
    <property type="entry name" value="R3ZR1"/>
</dbReference>
<dbReference type="RefSeq" id="NP_384361.1">
    <property type="nucleotide sequence ID" value="NC_003047.1"/>
</dbReference>
<dbReference type="RefSeq" id="WP_003534399.1">
    <property type="nucleotide sequence ID" value="NC_003047.1"/>
</dbReference>
<dbReference type="SMR" id="P14129"/>
<dbReference type="EnsemblBacteria" id="CAC41692">
    <property type="protein sequence ID" value="CAC41692"/>
    <property type="gene ID" value="SMc00335"/>
</dbReference>
<dbReference type="GeneID" id="89574582"/>
<dbReference type="KEGG" id="sme:SMc00335"/>
<dbReference type="PATRIC" id="fig|266834.11.peg.1622"/>
<dbReference type="eggNOG" id="COG0539">
    <property type="taxonomic scope" value="Bacteria"/>
</dbReference>
<dbReference type="HOGENOM" id="CLU_015805_2_1_5"/>
<dbReference type="OrthoDB" id="9804077at2"/>
<dbReference type="Proteomes" id="UP000001976">
    <property type="component" value="Chromosome"/>
</dbReference>
<dbReference type="GO" id="GO:0022627">
    <property type="term" value="C:cytosolic small ribosomal subunit"/>
    <property type="evidence" value="ECO:0007669"/>
    <property type="project" value="TreeGrafter"/>
</dbReference>
<dbReference type="GO" id="GO:0003729">
    <property type="term" value="F:mRNA binding"/>
    <property type="evidence" value="ECO:0007669"/>
    <property type="project" value="TreeGrafter"/>
</dbReference>
<dbReference type="GO" id="GO:0003735">
    <property type="term" value="F:structural constituent of ribosome"/>
    <property type="evidence" value="ECO:0007669"/>
    <property type="project" value="InterPro"/>
</dbReference>
<dbReference type="GO" id="GO:0006412">
    <property type="term" value="P:translation"/>
    <property type="evidence" value="ECO:0007669"/>
    <property type="project" value="InterPro"/>
</dbReference>
<dbReference type="CDD" id="cd05687">
    <property type="entry name" value="S1_RPS1_repeat_ec1_hs1"/>
    <property type="match status" value="1"/>
</dbReference>
<dbReference type="CDD" id="cd04465">
    <property type="entry name" value="S1_RPS1_repeat_ec2_hs2"/>
    <property type="match status" value="1"/>
</dbReference>
<dbReference type="CDD" id="cd05688">
    <property type="entry name" value="S1_RPS1_repeat_ec3"/>
    <property type="match status" value="1"/>
</dbReference>
<dbReference type="CDD" id="cd05691">
    <property type="entry name" value="S1_RPS1_repeat_ec6"/>
    <property type="match status" value="1"/>
</dbReference>
<dbReference type="FunFam" id="2.40.50.140:FF:000011">
    <property type="entry name" value="30S ribosomal protein S1"/>
    <property type="match status" value="1"/>
</dbReference>
<dbReference type="FunFam" id="2.40.50.140:FF:000018">
    <property type="entry name" value="30S ribosomal protein S1"/>
    <property type="match status" value="1"/>
</dbReference>
<dbReference type="Gene3D" id="2.40.50.140">
    <property type="entry name" value="Nucleic acid-binding proteins"/>
    <property type="match status" value="6"/>
</dbReference>
<dbReference type="InterPro" id="IPR012340">
    <property type="entry name" value="NA-bd_OB-fold"/>
</dbReference>
<dbReference type="InterPro" id="IPR050437">
    <property type="entry name" value="Ribos_protein_bS1-like"/>
</dbReference>
<dbReference type="InterPro" id="IPR000110">
    <property type="entry name" value="Ribosomal_bS1"/>
</dbReference>
<dbReference type="InterPro" id="IPR035104">
    <property type="entry name" value="Ribosomal_protein_S1-like"/>
</dbReference>
<dbReference type="InterPro" id="IPR003029">
    <property type="entry name" value="S1_domain"/>
</dbReference>
<dbReference type="NCBIfam" id="NF004952">
    <property type="entry name" value="PRK06299.1-2"/>
    <property type="match status" value="1"/>
</dbReference>
<dbReference type="NCBIfam" id="NF004955">
    <property type="entry name" value="PRK06299.1-5"/>
    <property type="match status" value="1"/>
</dbReference>
<dbReference type="NCBIfam" id="TIGR00717">
    <property type="entry name" value="rpsA"/>
    <property type="match status" value="1"/>
</dbReference>
<dbReference type="PANTHER" id="PTHR10724">
    <property type="entry name" value="30S RIBOSOMAL PROTEIN S1"/>
    <property type="match status" value="1"/>
</dbReference>
<dbReference type="PANTHER" id="PTHR10724:SF7">
    <property type="entry name" value="SMALL RIBOSOMAL SUBUNIT PROTEIN BS1C"/>
    <property type="match status" value="1"/>
</dbReference>
<dbReference type="Pfam" id="PF00575">
    <property type="entry name" value="S1"/>
    <property type="match status" value="6"/>
</dbReference>
<dbReference type="PIRSF" id="PIRSF002111">
    <property type="entry name" value="RpsA"/>
    <property type="match status" value="1"/>
</dbReference>
<dbReference type="PRINTS" id="PR00681">
    <property type="entry name" value="RIBOSOMALS1"/>
</dbReference>
<dbReference type="SMART" id="SM00316">
    <property type="entry name" value="S1"/>
    <property type="match status" value="6"/>
</dbReference>
<dbReference type="SUPFAM" id="SSF50249">
    <property type="entry name" value="Nucleic acid-binding proteins"/>
    <property type="match status" value="6"/>
</dbReference>
<dbReference type="PROSITE" id="PS50126">
    <property type="entry name" value="S1"/>
    <property type="match status" value="6"/>
</dbReference>